<organism>
    <name type="scientific">Arabidopsis thaliana</name>
    <name type="common">Mouse-ear cress</name>
    <dbReference type="NCBI Taxonomy" id="3702"/>
    <lineage>
        <taxon>Eukaryota</taxon>
        <taxon>Viridiplantae</taxon>
        <taxon>Streptophyta</taxon>
        <taxon>Embryophyta</taxon>
        <taxon>Tracheophyta</taxon>
        <taxon>Spermatophyta</taxon>
        <taxon>Magnoliopsida</taxon>
        <taxon>eudicotyledons</taxon>
        <taxon>Gunneridae</taxon>
        <taxon>Pentapetalae</taxon>
        <taxon>rosids</taxon>
        <taxon>malvids</taxon>
        <taxon>Brassicales</taxon>
        <taxon>Brassicaceae</taxon>
        <taxon>Camelineae</taxon>
        <taxon>Arabidopsis</taxon>
    </lineage>
</organism>
<evidence type="ECO:0000255" key="1">
    <source>
        <dbReference type="PROSITE-ProRule" id="PRU00326"/>
    </source>
</evidence>
<evidence type="ECO:0000256" key="2">
    <source>
        <dbReference type="SAM" id="MobiDB-lite"/>
    </source>
</evidence>
<gene>
    <name type="ordered locus">At3g49610</name>
    <name type="ORF">T9C5.200</name>
</gene>
<protein>
    <recommendedName>
        <fullName>Putative B3 domain-containing protein At3g49610</fullName>
    </recommendedName>
</protein>
<accession>Q9SCJ8</accession>
<comment type="subcellular location">
    <subcellularLocation>
        <location evidence="1">Nucleus</location>
    </subcellularLocation>
</comment>
<feature type="chain" id="PRO_0000375145" description="Putative B3 domain-containing protein At3g49610">
    <location>
        <begin position="1"/>
        <end position="334"/>
    </location>
</feature>
<feature type="DNA-binding region" description="TF-B3" evidence="1">
    <location>
        <begin position="229"/>
        <end position="334"/>
    </location>
</feature>
<feature type="region of interest" description="Disordered" evidence="2">
    <location>
        <begin position="69"/>
        <end position="89"/>
    </location>
</feature>
<feature type="region of interest" description="Disordered" evidence="2">
    <location>
        <begin position="133"/>
        <end position="178"/>
    </location>
</feature>
<feature type="compositionally biased region" description="Polar residues" evidence="2">
    <location>
        <begin position="73"/>
        <end position="84"/>
    </location>
</feature>
<feature type="compositionally biased region" description="Polar residues" evidence="2">
    <location>
        <begin position="141"/>
        <end position="157"/>
    </location>
</feature>
<feature type="compositionally biased region" description="Basic residues" evidence="2">
    <location>
        <begin position="161"/>
        <end position="173"/>
    </location>
</feature>
<name>Y3961_ARATH</name>
<proteinExistence type="inferred from homology"/>
<dbReference type="EMBL" id="AL132964">
    <property type="protein sequence ID" value="CAB62465.1"/>
    <property type="molecule type" value="Genomic_DNA"/>
</dbReference>
<dbReference type="EMBL" id="CP002686">
    <property type="protein sequence ID" value="AEE78566.1"/>
    <property type="molecule type" value="Genomic_DNA"/>
</dbReference>
<dbReference type="EMBL" id="AB493642">
    <property type="protein sequence ID" value="BAH30480.1"/>
    <property type="molecule type" value="Genomic_DNA"/>
</dbReference>
<dbReference type="PIR" id="T46238">
    <property type="entry name" value="T46238"/>
</dbReference>
<dbReference type="RefSeq" id="NP_190530.1">
    <property type="nucleotide sequence ID" value="NM_114821.1"/>
</dbReference>
<dbReference type="iPTMnet" id="Q9SCJ8"/>
<dbReference type="PaxDb" id="3702-AT3G49610.1"/>
<dbReference type="EnsemblPlants" id="AT3G49610.1">
    <property type="protein sequence ID" value="AT3G49610.1"/>
    <property type="gene ID" value="AT3G49610"/>
</dbReference>
<dbReference type="GeneID" id="824123"/>
<dbReference type="Gramene" id="AT3G49610.1">
    <property type="protein sequence ID" value="AT3G49610.1"/>
    <property type="gene ID" value="AT3G49610"/>
</dbReference>
<dbReference type="KEGG" id="ath:AT3G49610"/>
<dbReference type="Araport" id="AT3G49610"/>
<dbReference type="TAIR" id="AT3G49610"/>
<dbReference type="HOGENOM" id="CLU_072178_0_0_1"/>
<dbReference type="InParanoid" id="Q9SCJ8"/>
<dbReference type="OMA" id="DKSETHC"/>
<dbReference type="PhylomeDB" id="Q9SCJ8"/>
<dbReference type="PRO" id="PR:Q9SCJ8"/>
<dbReference type="Proteomes" id="UP000006548">
    <property type="component" value="Chromosome 3"/>
</dbReference>
<dbReference type="ExpressionAtlas" id="Q9SCJ8">
    <property type="expression patterns" value="differential"/>
</dbReference>
<dbReference type="GO" id="GO:0005634">
    <property type="term" value="C:nucleus"/>
    <property type="evidence" value="ECO:0007669"/>
    <property type="project" value="UniProtKB-SubCell"/>
</dbReference>
<dbReference type="GO" id="GO:0003677">
    <property type="term" value="F:DNA binding"/>
    <property type="evidence" value="ECO:0007669"/>
    <property type="project" value="UniProtKB-KW"/>
</dbReference>
<dbReference type="Gene3D" id="2.40.330.10">
    <property type="entry name" value="DNA-binding pseudobarrel domain"/>
    <property type="match status" value="1"/>
</dbReference>
<dbReference type="InterPro" id="IPR005508">
    <property type="entry name" value="At2g31720-like"/>
</dbReference>
<dbReference type="InterPro" id="IPR003340">
    <property type="entry name" value="B3_DNA-bd"/>
</dbReference>
<dbReference type="InterPro" id="IPR015300">
    <property type="entry name" value="DNA-bd_pseudobarrel_sf"/>
</dbReference>
<dbReference type="PANTHER" id="PTHR31541">
    <property type="entry name" value="B3 DOMAIN PLANT PROTEIN-RELATED"/>
    <property type="match status" value="1"/>
</dbReference>
<dbReference type="PANTHER" id="PTHR31541:SF34">
    <property type="entry name" value="TF-B3 DOMAIN-CONTAINING PROTEIN"/>
    <property type="match status" value="1"/>
</dbReference>
<dbReference type="Pfam" id="PF03754">
    <property type="entry name" value="At2g31720-like"/>
    <property type="match status" value="1"/>
</dbReference>
<dbReference type="SUPFAM" id="SSF101936">
    <property type="entry name" value="DNA-binding pseudobarrel domain"/>
    <property type="match status" value="1"/>
</dbReference>
<dbReference type="PROSITE" id="PS50863">
    <property type="entry name" value="B3"/>
    <property type="match status" value="1"/>
</dbReference>
<reference key="1">
    <citation type="journal article" date="2000" name="Nature">
        <title>Sequence and analysis of chromosome 3 of the plant Arabidopsis thaliana.</title>
        <authorList>
            <person name="Salanoubat M."/>
            <person name="Lemcke K."/>
            <person name="Rieger M."/>
            <person name="Ansorge W."/>
            <person name="Unseld M."/>
            <person name="Fartmann B."/>
            <person name="Valle G."/>
            <person name="Bloecker H."/>
            <person name="Perez-Alonso M."/>
            <person name="Obermaier B."/>
            <person name="Delseny M."/>
            <person name="Boutry M."/>
            <person name="Grivell L.A."/>
            <person name="Mache R."/>
            <person name="Puigdomenech P."/>
            <person name="De Simone V."/>
            <person name="Choisne N."/>
            <person name="Artiguenave F."/>
            <person name="Robert C."/>
            <person name="Brottier P."/>
            <person name="Wincker P."/>
            <person name="Cattolico L."/>
            <person name="Weissenbach J."/>
            <person name="Saurin W."/>
            <person name="Quetier F."/>
            <person name="Schaefer M."/>
            <person name="Mueller-Auer S."/>
            <person name="Gabel C."/>
            <person name="Fuchs M."/>
            <person name="Benes V."/>
            <person name="Wurmbach E."/>
            <person name="Drzonek H."/>
            <person name="Erfle H."/>
            <person name="Jordan N."/>
            <person name="Bangert S."/>
            <person name="Wiedelmann R."/>
            <person name="Kranz H."/>
            <person name="Voss H."/>
            <person name="Holland R."/>
            <person name="Brandt P."/>
            <person name="Nyakatura G."/>
            <person name="Vezzi A."/>
            <person name="D'Angelo M."/>
            <person name="Pallavicini A."/>
            <person name="Toppo S."/>
            <person name="Simionati B."/>
            <person name="Conrad A."/>
            <person name="Hornischer K."/>
            <person name="Kauer G."/>
            <person name="Loehnert T.-H."/>
            <person name="Nordsiek G."/>
            <person name="Reichelt J."/>
            <person name="Scharfe M."/>
            <person name="Schoen O."/>
            <person name="Bargues M."/>
            <person name="Terol J."/>
            <person name="Climent J."/>
            <person name="Navarro P."/>
            <person name="Collado C."/>
            <person name="Perez-Perez A."/>
            <person name="Ottenwaelder B."/>
            <person name="Duchemin D."/>
            <person name="Cooke R."/>
            <person name="Laudie M."/>
            <person name="Berger-Llauro C."/>
            <person name="Purnelle B."/>
            <person name="Masuy D."/>
            <person name="de Haan M."/>
            <person name="Maarse A.C."/>
            <person name="Alcaraz J.-P."/>
            <person name="Cottet A."/>
            <person name="Casacuberta E."/>
            <person name="Monfort A."/>
            <person name="Argiriou A."/>
            <person name="Flores M."/>
            <person name="Liguori R."/>
            <person name="Vitale D."/>
            <person name="Mannhaupt G."/>
            <person name="Haase D."/>
            <person name="Schoof H."/>
            <person name="Rudd S."/>
            <person name="Zaccaria P."/>
            <person name="Mewes H.-W."/>
            <person name="Mayer K.F.X."/>
            <person name="Kaul S."/>
            <person name="Town C.D."/>
            <person name="Koo H.L."/>
            <person name="Tallon L.J."/>
            <person name="Jenkins J."/>
            <person name="Rooney T."/>
            <person name="Rizzo M."/>
            <person name="Walts A."/>
            <person name="Utterback T."/>
            <person name="Fujii C.Y."/>
            <person name="Shea T.P."/>
            <person name="Creasy T.H."/>
            <person name="Haas B."/>
            <person name="Maiti R."/>
            <person name="Wu D."/>
            <person name="Peterson J."/>
            <person name="Van Aken S."/>
            <person name="Pai G."/>
            <person name="Militscher J."/>
            <person name="Sellers P."/>
            <person name="Gill J.E."/>
            <person name="Feldblyum T.V."/>
            <person name="Preuss D."/>
            <person name="Lin X."/>
            <person name="Nierman W.C."/>
            <person name="Salzberg S.L."/>
            <person name="White O."/>
            <person name="Venter J.C."/>
            <person name="Fraser C.M."/>
            <person name="Kaneko T."/>
            <person name="Nakamura Y."/>
            <person name="Sato S."/>
            <person name="Kato T."/>
            <person name="Asamizu E."/>
            <person name="Sasamoto S."/>
            <person name="Kimura T."/>
            <person name="Idesawa K."/>
            <person name="Kawashima K."/>
            <person name="Kishida Y."/>
            <person name="Kiyokawa C."/>
            <person name="Kohara M."/>
            <person name="Matsumoto M."/>
            <person name="Matsuno A."/>
            <person name="Muraki A."/>
            <person name="Nakayama S."/>
            <person name="Nakazaki N."/>
            <person name="Shinpo S."/>
            <person name="Takeuchi C."/>
            <person name="Wada T."/>
            <person name="Watanabe A."/>
            <person name="Yamada M."/>
            <person name="Yasuda M."/>
            <person name="Tabata S."/>
        </authorList>
    </citation>
    <scope>NUCLEOTIDE SEQUENCE [LARGE SCALE GENOMIC DNA]</scope>
    <source>
        <strain>cv. Columbia</strain>
    </source>
</reference>
<reference key="2">
    <citation type="journal article" date="2017" name="Plant J.">
        <title>Araport11: a complete reannotation of the Arabidopsis thaliana reference genome.</title>
        <authorList>
            <person name="Cheng C.Y."/>
            <person name="Krishnakumar V."/>
            <person name="Chan A.P."/>
            <person name="Thibaud-Nissen F."/>
            <person name="Schobel S."/>
            <person name="Town C.D."/>
        </authorList>
    </citation>
    <scope>GENOME REANNOTATION</scope>
    <source>
        <strain>cv. Columbia</strain>
    </source>
</reference>
<reference key="3">
    <citation type="submission" date="2009-03" db="EMBL/GenBank/DDBJ databases">
        <title>ORF cloning and analysis of Arabidopsis transcription factor genes.</title>
        <authorList>
            <person name="Fujita M."/>
            <person name="Mizukado S."/>
            <person name="Seki M."/>
            <person name="Shinozaki K."/>
            <person name="Mitsuda N."/>
            <person name="Takiguchi Y."/>
            <person name="Takagi M."/>
        </authorList>
    </citation>
    <scope>NUCLEOTIDE SEQUENCE [LARGE SCALE GENOMIC DNA]</scope>
</reference>
<reference key="4">
    <citation type="journal article" date="2008" name="Trends Plant Sci.">
        <title>The plant B3 superfamily.</title>
        <authorList>
            <person name="Swaminathan K."/>
            <person name="Peterson K."/>
            <person name="Jack T."/>
        </authorList>
    </citation>
    <scope>GENE FAMILY</scope>
</reference>
<sequence length="334" mass="38509">MNRNHHDHLDAAGKDMWSRLSDLADKADMLYEREGISKDRKSVSEEEEEKKTRFSILVDLVGRLCDQEERRTLGSSPTKTNTLFEGSEKSHLDHHLDHLPQKPRSSLECFFTRVYTRRNHNNVSTSSSLFNTDEFERTETKSPTIRNSQSSPSSCLMENTKRKRYQSSGKSKKPKFDPFSLTAARETPEWLLDVMRKMKGAEGPIKLIYEKTLTATDVKPSESRLLIPFNKLLRNDFLTPEESRAIAIDKEEEEEDTKKIGVKTIIVNQFSKEWSLRFLIWVMKKKKSGNGTLYYTLNRGWNGVVSGNKLKANDNISLWTFRCGGVLCFALEKE</sequence>
<keyword id="KW-0238">DNA-binding</keyword>
<keyword id="KW-0539">Nucleus</keyword>
<keyword id="KW-1185">Reference proteome</keyword>
<keyword id="KW-0804">Transcription</keyword>
<keyword id="KW-0805">Transcription regulation</keyword>